<name>ESF1_YEAST</name>
<keyword id="KW-0175">Coiled coil</keyword>
<keyword id="KW-0539">Nucleus</keyword>
<keyword id="KW-0597">Phosphoprotein</keyword>
<keyword id="KW-1185">Reference proteome</keyword>
<keyword id="KW-0690">Ribosome biogenesis</keyword>
<keyword id="KW-0694">RNA-binding</keyword>
<keyword id="KW-0698">rRNA processing</keyword>
<proteinExistence type="evidence at protein level"/>
<organism>
    <name type="scientific">Saccharomyces cerevisiae (strain ATCC 204508 / S288c)</name>
    <name type="common">Baker's yeast</name>
    <dbReference type="NCBI Taxonomy" id="559292"/>
    <lineage>
        <taxon>Eukaryota</taxon>
        <taxon>Fungi</taxon>
        <taxon>Dikarya</taxon>
        <taxon>Ascomycota</taxon>
        <taxon>Saccharomycotina</taxon>
        <taxon>Saccharomycetes</taxon>
        <taxon>Saccharomycetales</taxon>
        <taxon>Saccharomycetaceae</taxon>
        <taxon>Saccharomyces</taxon>
    </lineage>
</organism>
<accession>Q06344</accession>
<accession>D6VSZ4</accession>
<evidence type="ECO:0000255" key="1"/>
<evidence type="ECO:0000256" key="2">
    <source>
        <dbReference type="SAM" id="MobiDB-lite"/>
    </source>
</evidence>
<evidence type="ECO:0000269" key="3">
    <source>
    </source>
</evidence>
<evidence type="ECO:0000269" key="4">
    <source>
    </source>
</evidence>
<evidence type="ECO:0000269" key="5">
    <source>
    </source>
</evidence>
<evidence type="ECO:0000269" key="6">
    <source>
    </source>
</evidence>
<evidence type="ECO:0000305" key="7"/>
<evidence type="ECO:0007744" key="8">
    <source>
    </source>
</evidence>
<evidence type="ECO:0007744" key="9">
    <source>
    </source>
</evidence>
<evidence type="ECO:0007744" key="10">
    <source>
    </source>
</evidence>
<evidence type="ECO:0007744" key="11">
    <source>
    </source>
</evidence>
<sequence>MAGENPKKEGVDARFAGIYSDPKFKNTKTKDHKIKLDSRFSKKDLEVQHKSKVDKYGRKIKNAQNNRELEDFDKYFEKEAENDEDSEVNAKTVVDRARGEVPDDYVSSSDEFTSSDSESSGESEVESEEENEVEIENAKPESGDISKNLAVVNLDWDHVKSEDLMITFSSFVPKGGKIERVAIYPSEFGKERMQREEVEGPPKELFQKKNKNKTSKKKKTDDSDSDMDIGIKDLYEEGDADKDVDSRALRQYQLDRLRYYYAIVYCSDTTTSKAIYDNCDGTEYESTANMFDLRYVPDGMTFDDDVRDECSILPKNYRPHQFSTDALQHSSVKLTWDETPADRVEVAKRAFTQKEIDDMDFKAYLASDSDESDGQVDEEAKNKLKSLVGDFGFNSKKETPNDEDEEVDMEITFTPALEGGNEKSSEDKEETTIEKIRRKEKERRKARKQKVKELKQQSEKDKKSKLKSVNKKHTNDEEEIEKNAKSKAELELLMDDDDDTETQGTINNKAHFNMNEILRSEKEKHKKGRYQKKERIVEDTFTPDLEDPRFKEVFEDHDFAIDPTQPEFKGTQAMSKILKERSKRVKNKKRKLGGSENNMTNNADDNEDIGNLVNKLKKKSKSSKKVKV</sequence>
<gene>
    <name type="primary">ESF1</name>
    <name type="ordered locus">YDR365C</name>
</gene>
<feature type="chain" id="PRO_0000228158" description="Pre-rRNA-processing protein ESF1">
    <location>
        <begin position="1"/>
        <end position="628"/>
    </location>
</feature>
<feature type="region of interest" description="Disordered" evidence="2">
    <location>
        <begin position="78"/>
        <end position="147"/>
    </location>
</feature>
<feature type="region of interest" description="Disordered" evidence="2">
    <location>
        <begin position="192"/>
        <end position="229"/>
    </location>
</feature>
<feature type="region of interest" description="Disordered" evidence="2">
    <location>
        <begin position="412"/>
        <end position="541"/>
    </location>
</feature>
<feature type="region of interest" description="Disordered" evidence="2">
    <location>
        <begin position="582"/>
        <end position="628"/>
    </location>
</feature>
<feature type="coiled-coil region" evidence="1">
    <location>
        <begin position="426"/>
        <end position="495"/>
    </location>
</feature>
<feature type="compositionally biased region" description="Low complexity" evidence="2">
    <location>
        <begin position="104"/>
        <end position="118"/>
    </location>
</feature>
<feature type="compositionally biased region" description="Acidic residues" evidence="2">
    <location>
        <begin position="119"/>
        <end position="135"/>
    </location>
</feature>
<feature type="compositionally biased region" description="Basic and acidic residues" evidence="2">
    <location>
        <begin position="192"/>
        <end position="207"/>
    </location>
</feature>
<feature type="compositionally biased region" description="Basic residues" evidence="2">
    <location>
        <begin position="208"/>
        <end position="218"/>
    </location>
</feature>
<feature type="compositionally biased region" description="Basic and acidic residues" evidence="2">
    <location>
        <begin position="420"/>
        <end position="439"/>
    </location>
</feature>
<feature type="compositionally biased region" description="Basic residues" evidence="2">
    <location>
        <begin position="440"/>
        <end position="450"/>
    </location>
</feature>
<feature type="compositionally biased region" description="Basic and acidic residues" evidence="2">
    <location>
        <begin position="451"/>
        <end position="462"/>
    </location>
</feature>
<feature type="compositionally biased region" description="Basic residues" evidence="2">
    <location>
        <begin position="463"/>
        <end position="472"/>
    </location>
</feature>
<feature type="compositionally biased region" description="Basic and acidic residues" evidence="2">
    <location>
        <begin position="481"/>
        <end position="490"/>
    </location>
</feature>
<feature type="compositionally biased region" description="Acidic residues" evidence="2">
    <location>
        <begin position="492"/>
        <end position="501"/>
    </location>
</feature>
<feature type="compositionally biased region" description="Basic residues" evidence="2">
    <location>
        <begin position="582"/>
        <end position="592"/>
    </location>
</feature>
<feature type="compositionally biased region" description="Basic residues" evidence="2">
    <location>
        <begin position="615"/>
        <end position="628"/>
    </location>
</feature>
<feature type="modified residue" description="Phosphoserine" evidence="9 10 11">
    <location>
        <position position="86"/>
    </location>
</feature>
<feature type="modified residue" description="Phosphothreonine" evidence="8">
    <location>
        <position position="220"/>
    </location>
</feature>
<feature type="modified residue" description="Phosphoserine" evidence="9 10 11">
    <location>
        <position position="223"/>
    </location>
</feature>
<feature type="modified residue" description="Phosphoserine" evidence="8 9 10 11">
    <location>
        <position position="225"/>
    </location>
</feature>
<feature type="modified residue" description="Phosphoserine" evidence="9 11">
    <location>
        <position position="367"/>
    </location>
</feature>
<feature type="modified residue" description="Phosphoserine" evidence="9 10 11">
    <location>
        <position position="369"/>
    </location>
</feature>
<feature type="modified residue" description="Phosphoserine" evidence="9 10 11">
    <location>
        <position position="372"/>
    </location>
</feature>
<feature type="modified residue" description="Phosphothreonine" evidence="9 10 11">
    <location>
        <position position="542"/>
    </location>
</feature>
<protein>
    <recommendedName>
        <fullName>Pre-rRNA-processing protein ESF1</fullName>
    </recommendedName>
    <alternativeName>
        <fullName>18S rRNA factor 1</fullName>
    </alternativeName>
</protein>
<reference key="1">
    <citation type="journal article" date="1997" name="Nature">
        <title>The nucleotide sequence of Saccharomyces cerevisiae chromosome IV.</title>
        <authorList>
            <person name="Jacq C."/>
            <person name="Alt-Moerbe J."/>
            <person name="Andre B."/>
            <person name="Arnold W."/>
            <person name="Bahr A."/>
            <person name="Ballesta J.P.G."/>
            <person name="Bargues M."/>
            <person name="Baron L."/>
            <person name="Becker A."/>
            <person name="Biteau N."/>
            <person name="Bloecker H."/>
            <person name="Blugeon C."/>
            <person name="Boskovic J."/>
            <person name="Brandt P."/>
            <person name="Brueckner M."/>
            <person name="Buitrago M.J."/>
            <person name="Coster F."/>
            <person name="Delaveau T."/>
            <person name="del Rey F."/>
            <person name="Dujon B."/>
            <person name="Eide L.G."/>
            <person name="Garcia-Cantalejo J.M."/>
            <person name="Goffeau A."/>
            <person name="Gomez-Peris A."/>
            <person name="Granotier C."/>
            <person name="Hanemann V."/>
            <person name="Hankeln T."/>
            <person name="Hoheisel J.D."/>
            <person name="Jaeger W."/>
            <person name="Jimenez A."/>
            <person name="Jonniaux J.-L."/>
            <person name="Kraemer C."/>
            <person name="Kuester H."/>
            <person name="Laamanen P."/>
            <person name="Legros Y."/>
            <person name="Louis E.J."/>
            <person name="Moeller-Rieker S."/>
            <person name="Monnet A."/>
            <person name="Moro M."/>
            <person name="Mueller-Auer S."/>
            <person name="Nussbaumer B."/>
            <person name="Paricio N."/>
            <person name="Paulin L."/>
            <person name="Perea J."/>
            <person name="Perez-Alonso M."/>
            <person name="Perez-Ortin J.E."/>
            <person name="Pohl T.M."/>
            <person name="Prydz H."/>
            <person name="Purnelle B."/>
            <person name="Rasmussen S.W."/>
            <person name="Remacha M.A."/>
            <person name="Revuelta J.L."/>
            <person name="Rieger M."/>
            <person name="Salom D."/>
            <person name="Saluz H.P."/>
            <person name="Saiz J.E."/>
            <person name="Saren A.-M."/>
            <person name="Schaefer M."/>
            <person name="Scharfe M."/>
            <person name="Schmidt E.R."/>
            <person name="Schneider C."/>
            <person name="Scholler P."/>
            <person name="Schwarz S."/>
            <person name="Soler-Mira A."/>
            <person name="Urrestarazu L.A."/>
            <person name="Verhasselt P."/>
            <person name="Vissers S."/>
            <person name="Voet M."/>
            <person name="Volckaert G."/>
            <person name="Wagner G."/>
            <person name="Wambutt R."/>
            <person name="Wedler E."/>
            <person name="Wedler H."/>
            <person name="Woelfl S."/>
            <person name="Harris D.E."/>
            <person name="Bowman S."/>
            <person name="Brown D."/>
            <person name="Churcher C.M."/>
            <person name="Connor R."/>
            <person name="Dedman K."/>
            <person name="Gentles S."/>
            <person name="Hamlin N."/>
            <person name="Hunt S."/>
            <person name="Jones L."/>
            <person name="McDonald S."/>
            <person name="Murphy L.D."/>
            <person name="Niblett D."/>
            <person name="Odell C."/>
            <person name="Oliver K."/>
            <person name="Rajandream M.A."/>
            <person name="Richards C."/>
            <person name="Shore L."/>
            <person name="Walsh S.V."/>
            <person name="Barrell B.G."/>
            <person name="Dietrich F.S."/>
            <person name="Mulligan J.T."/>
            <person name="Allen E."/>
            <person name="Araujo R."/>
            <person name="Aviles E."/>
            <person name="Berno A."/>
            <person name="Carpenter J."/>
            <person name="Chen E."/>
            <person name="Cherry J.M."/>
            <person name="Chung E."/>
            <person name="Duncan M."/>
            <person name="Hunicke-Smith S."/>
            <person name="Hyman R.W."/>
            <person name="Komp C."/>
            <person name="Lashkari D."/>
            <person name="Lew H."/>
            <person name="Lin D."/>
            <person name="Mosedale D."/>
            <person name="Nakahara K."/>
            <person name="Namath A."/>
            <person name="Oefner P."/>
            <person name="Oh C."/>
            <person name="Petel F.X."/>
            <person name="Roberts D."/>
            <person name="Schramm S."/>
            <person name="Schroeder M."/>
            <person name="Shogren T."/>
            <person name="Shroff N."/>
            <person name="Winant A."/>
            <person name="Yelton M.A."/>
            <person name="Botstein D."/>
            <person name="Davis R.W."/>
            <person name="Johnston M."/>
            <person name="Andrews S."/>
            <person name="Brinkman R."/>
            <person name="Cooper J."/>
            <person name="Ding H."/>
            <person name="Du Z."/>
            <person name="Favello A."/>
            <person name="Fulton L."/>
            <person name="Gattung S."/>
            <person name="Greco T."/>
            <person name="Hallsworth K."/>
            <person name="Hawkins J."/>
            <person name="Hillier L.W."/>
            <person name="Jier M."/>
            <person name="Johnson D."/>
            <person name="Johnston L."/>
            <person name="Kirsten J."/>
            <person name="Kucaba T."/>
            <person name="Langston Y."/>
            <person name="Latreille P."/>
            <person name="Le T."/>
            <person name="Mardis E."/>
            <person name="Menezes S."/>
            <person name="Miller N."/>
            <person name="Nhan M."/>
            <person name="Pauley A."/>
            <person name="Peluso D."/>
            <person name="Rifkin L."/>
            <person name="Riles L."/>
            <person name="Taich A."/>
            <person name="Trevaskis E."/>
            <person name="Vignati D."/>
            <person name="Wilcox L."/>
            <person name="Wohldman P."/>
            <person name="Vaudin M."/>
            <person name="Wilson R."/>
            <person name="Waterston R."/>
            <person name="Albermann K."/>
            <person name="Hani J."/>
            <person name="Heumann K."/>
            <person name="Kleine K."/>
            <person name="Mewes H.-W."/>
            <person name="Zollner A."/>
            <person name="Zaccaria P."/>
        </authorList>
    </citation>
    <scope>NUCLEOTIDE SEQUENCE [LARGE SCALE GENOMIC DNA]</scope>
    <source>
        <strain>ATCC 204508 / S288c</strain>
    </source>
</reference>
<reference key="2">
    <citation type="journal article" date="2014" name="G3 (Bethesda)">
        <title>The reference genome sequence of Saccharomyces cerevisiae: Then and now.</title>
        <authorList>
            <person name="Engel S.R."/>
            <person name="Dietrich F.S."/>
            <person name="Fisk D.G."/>
            <person name="Binkley G."/>
            <person name="Balakrishnan R."/>
            <person name="Costanzo M.C."/>
            <person name="Dwight S.S."/>
            <person name="Hitz B.C."/>
            <person name="Karra K."/>
            <person name="Nash R.S."/>
            <person name="Weng S."/>
            <person name="Wong E.D."/>
            <person name="Lloyd P."/>
            <person name="Skrzypek M.S."/>
            <person name="Miyasato S.R."/>
            <person name="Simison M."/>
            <person name="Cherry J.M."/>
        </authorList>
    </citation>
    <scope>GENOME REANNOTATION</scope>
    <source>
        <strain>ATCC 204508 / S288c</strain>
    </source>
</reference>
<reference key="3">
    <citation type="journal article" date="2003" name="Mol. Cell">
        <title>Assigning function to yeast proteins by integration of technologies.</title>
        <authorList>
            <person name="Hazbun T.R."/>
            <person name="Malmstroem L."/>
            <person name="Anderson S."/>
            <person name="Graczyk B.J."/>
            <person name="Fox B."/>
            <person name="Riffle M."/>
            <person name="Sundin B.A."/>
            <person name="Aranda J.D."/>
            <person name="McDonald W.H."/>
            <person name="Chiu C.-H."/>
            <person name="Snydsman B.E."/>
            <person name="Bradley P."/>
            <person name="Muller E.G.D."/>
            <person name="Fields S."/>
            <person name="Baker D."/>
            <person name="Yates J.R. III"/>
            <person name="Davis T.N."/>
        </authorList>
    </citation>
    <scope>FUNCTION</scope>
    <scope>IDENTIFICATION BY MASS SPECTROMETRY</scope>
    <scope>SUBCELLULAR LOCATION [LARGE SCALE ANALYSIS]</scope>
</reference>
<reference key="4">
    <citation type="journal article" date="2003" name="Nature">
        <title>Global analysis of protein localization in budding yeast.</title>
        <authorList>
            <person name="Huh W.-K."/>
            <person name="Falvo J.V."/>
            <person name="Gerke L.C."/>
            <person name="Carroll A.S."/>
            <person name="Howson R.W."/>
            <person name="Weissman J.S."/>
            <person name="O'Shea E.K."/>
        </authorList>
    </citation>
    <scope>SUBCELLULAR LOCATION [LARGE SCALE ANALYSIS]</scope>
</reference>
<reference key="5">
    <citation type="journal article" date="2003" name="Nature">
        <title>Global analysis of protein expression in yeast.</title>
        <authorList>
            <person name="Ghaemmaghami S."/>
            <person name="Huh W.-K."/>
            <person name="Bower K."/>
            <person name="Howson R.W."/>
            <person name="Belle A."/>
            <person name="Dephoure N."/>
            <person name="O'Shea E.K."/>
            <person name="Weissman J.S."/>
        </authorList>
    </citation>
    <scope>LEVEL OF PROTEIN EXPRESSION [LARGE SCALE ANALYSIS]</scope>
</reference>
<reference key="6">
    <citation type="journal article" date="2004" name="Nucleic Acids Res.">
        <title>ESF1 is required for 18S rRNA synthesis in Saccharomyces cerevisiae.</title>
        <authorList>
            <person name="Peng W.-T."/>
            <person name="Krogan N.J."/>
            <person name="Richards D.P."/>
            <person name="Greenblatt J.F."/>
            <person name="Hughes T.R."/>
        </authorList>
    </citation>
    <scope>FUNCTION</scope>
    <scope>INTERACTION WITH NSR1; KRR1; NOP1; UTP22; PUF6; RPS1; RPS2; RPS3; RPS6; RPS11; RPL2; RPL3; RPL4; RPL7; RPL10; RPL20; RPP0 AND THE SNORNAS U3 AND U14</scope>
</reference>
<reference key="7">
    <citation type="journal article" date="2007" name="J. Proteome Res.">
        <title>Large-scale phosphorylation analysis of alpha-factor-arrested Saccharomyces cerevisiae.</title>
        <authorList>
            <person name="Li X."/>
            <person name="Gerber S.A."/>
            <person name="Rudner A.D."/>
            <person name="Beausoleil S.A."/>
            <person name="Haas W."/>
            <person name="Villen J."/>
            <person name="Elias J.E."/>
            <person name="Gygi S.P."/>
        </authorList>
    </citation>
    <scope>PHOSPHORYLATION [LARGE SCALE ANALYSIS] AT SER-86; SER-223; SER-225; SER-367; SER-369; SER-372 AND THR-542</scope>
    <scope>IDENTIFICATION BY MASS SPECTROMETRY [LARGE SCALE ANALYSIS]</scope>
    <source>
        <strain>ADR376</strain>
    </source>
</reference>
<reference key="8">
    <citation type="journal article" date="2007" name="Proc. Natl. Acad. Sci. U.S.A.">
        <title>Analysis of phosphorylation sites on proteins from Saccharomyces cerevisiae by electron transfer dissociation (ETD) mass spectrometry.</title>
        <authorList>
            <person name="Chi A."/>
            <person name="Huttenhower C."/>
            <person name="Geer L.Y."/>
            <person name="Coon J.J."/>
            <person name="Syka J.E.P."/>
            <person name="Bai D.L."/>
            <person name="Shabanowitz J."/>
            <person name="Burke D.J."/>
            <person name="Troyanskaya O.G."/>
            <person name="Hunt D.F."/>
        </authorList>
    </citation>
    <scope>PHOSPHORYLATION [LARGE SCALE ANALYSIS] AT THR-220 AND SER-225</scope>
    <scope>IDENTIFICATION BY MASS SPECTROMETRY [LARGE SCALE ANALYSIS]</scope>
</reference>
<reference key="9">
    <citation type="journal article" date="2008" name="Mol. Cell. Proteomics">
        <title>A multidimensional chromatography technology for in-depth phosphoproteome analysis.</title>
        <authorList>
            <person name="Albuquerque C.P."/>
            <person name="Smolka M.B."/>
            <person name="Payne S.H."/>
            <person name="Bafna V."/>
            <person name="Eng J."/>
            <person name="Zhou H."/>
        </authorList>
    </citation>
    <scope>PHOSPHORYLATION [LARGE SCALE ANALYSIS] AT SER-86; SER-223; SER-225; SER-369; SER-372 AND THR-542</scope>
    <scope>IDENTIFICATION BY MASS SPECTROMETRY [LARGE SCALE ANALYSIS]</scope>
</reference>
<reference key="10">
    <citation type="journal article" date="2009" name="Science">
        <title>Global analysis of Cdk1 substrate phosphorylation sites provides insights into evolution.</title>
        <authorList>
            <person name="Holt L.J."/>
            <person name="Tuch B.B."/>
            <person name="Villen J."/>
            <person name="Johnson A.D."/>
            <person name="Gygi S.P."/>
            <person name="Morgan D.O."/>
        </authorList>
    </citation>
    <scope>PHOSPHORYLATION [LARGE SCALE ANALYSIS] AT SER-86; SER-223; SER-225; SER-367; SER-369; SER-372 AND THR-542</scope>
    <scope>IDENTIFICATION BY MASS SPECTROMETRY [LARGE SCALE ANALYSIS]</scope>
</reference>
<reference key="11">
    <citation type="journal article" date="2012" name="Proc. Natl. Acad. Sci. U.S.A.">
        <title>N-terminal acetylome analyses and functional insights of the N-terminal acetyltransferase NatB.</title>
        <authorList>
            <person name="Van Damme P."/>
            <person name="Lasa M."/>
            <person name="Polevoda B."/>
            <person name="Gazquez C."/>
            <person name="Elosegui-Artola A."/>
            <person name="Kim D.S."/>
            <person name="De Juan-Pardo E."/>
            <person name="Demeyer K."/>
            <person name="Hole K."/>
            <person name="Larrea E."/>
            <person name="Timmerman E."/>
            <person name="Prieto J."/>
            <person name="Arnesen T."/>
            <person name="Sherman F."/>
            <person name="Gevaert K."/>
            <person name="Aldabe R."/>
        </authorList>
    </citation>
    <scope>IDENTIFICATION BY MASS SPECTROMETRY [LARGE SCALE ANALYSIS]</scope>
</reference>
<dbReference type="EMBL" id="U28373">
    <property type="protein sequence ID" value="AAB64801.1"/>
    <property type="molecule type" value="Genomic_DNA"/>
</dbReference>
<dbReference type="EMBL" id="BK006938">
    <property type="protein sequence ID" value="DAA12204.1"/>
    <property type="molecule type" value="Genomic_DNA"/>
</dbReference>
<dbReference type="PIR" id="S61160">
    <property type="entry name" value="S61160"/>
</dbReference>
<dbReference type="RefSeq" id="NP_010653.1">
    <property type="nucleotide sequence ID" value="NM_001180673.1"/>
</dbReference>
<dbReference type="BioGRID" id="32422">
    <property type="interactions" value="267"/>
</dbReference>
<dbReference type="DIP" id="DIP-5248N"/>
<dbReference type="FunCoup" id="Q06344">
    <property type="interactions" value="1348"/>
</dbReference>
<dbReference type="IntAct" id="Q06344">
    <property type="interactions" value="96"/>
</dbReference>
<dbReference type="MINT" id="Q06344"/>
<dbReference type="STRING" id="4932.YDR365C"/>
<dbReference type="iPTMnet" id="Q06344"/>
<dbReference type="PaxDb" id="4932-YDR365C"/>
<dbReference type="PeptideAtlas" id="Q06344"/>
<dbReference type="EnsemblFungi" id="YDR365C_mRNA">
    <property type="protein sequence ID" value="YDR365C"/>
    <property type="gene ID" value="YDR365C"/>
</dbReference>
<dbReference type="GeneID" id="851969"/>
<dbReference type="KEGG" id="sce:YDR365C"/>
<dbReference type="AGR" id="SGD:S000002773"/>
<dbReference type="SGD" id="S000002773">
    <property type="gene designation" value="ESF1"/>
</dbReference>
<dbReference type="VEuPathDB" id="FungiDB:YDR365C"/>
<dbReference type="eggNOG" id="KOG2318">
    <property type="taxonomic scope" value="Eukaryota"/>
</dbReference>
<dbReference type="GeneTree" id="ENSGT00390000004881"/>
<dbReference type="HOGENOM" id="CLU_010564_0_1_1"/>
<dbReference type="InParanoid" id="Q06344"/>
<dbReference type="OMA" id="DHDFAID"/>
<dbReference type="OrthoDB" id="431825at2759"/>
<dbReference type="BioCyc" id="YEAST:G3O-29915-MONOMER"/>
<dbReference type="BioGRID-ORCS" id="851969">
    <property type="hits" value="8 hits in 10 CRISPR screens"/>
</dbReference>
<dbReference type="CD-CODE" id="BDAE0F88">
    <property type="entry name" value="Nucleolus"/>
</dbReference>
<dbReference type="PRO" id="PR:Q06344"/>
<dbReference type="Proteomes" id="UP000002311">
    <property type="component" value="Chromosome IV"/>
</dbReference>
<dbReference type="RNAct" id="Q06344">
    <property type="molecule type" value="protein"/>
</dbReference>
<dbReference type="GO" id="GO:0005730">
    <property type="term" value="C:nucleolus"/>
    <property type="evidence" value="ECO:0000314"/>
    <property type="project" value="ComplexPortal"/>
</dbReference>
<dbReference type="GO" id="GO:0005634">
    <property type="term" value="C:nucleus"/>
    <property type="evidence" value="ECO:0007005"/>
    <property type="project" value="SGD"/>
</dbReference>
<dbReference type="GO" id="GO:0032040">
    <property type="term" value="C:small-subunit processome"/>
    <property type="evidence" value="ECO:0000353"/>
    <property type="project" value="ComplexPortal"/>
</dbReference>
<dbReference type="GO" id="GO:0003723">
    <property type="term" value="F:RNA binding"/>
    <property type="evidence" value="ECO:0000314"/>
    <property type="project" value="SGD"/>
</dbReference>
<dbReference type="GO" id="GO:0030490">
    <property type="term" value="P:maturation of SSU-rRNA"/>
    <property type="evidence" value="ECO:0000303"/>
    <property type="project" value="ComplexPortal"/>
</dbReference>
<dbReference type="GO" id="GO:0006364">
    <property type="term" value="P:rRNA processing"/>
    <property type="evidence" value="ECO:0000315"/>
    <property type="project" value="SGD"/>
</dbReference>
<dbReference type="InterPro" id="IPR039754">
    <property type="entry name" value="Esf1"/>
</dbReference>
<dbReference type="InterPro" id="IPR012580">
    <property type="entry name" value="NUC153"/>
</dbReference>
<dbReference type="InterPro" id="IPR056750">
    <property type="entry name" value="RRM_ESF1"/>
</dbReference>
<dbReference type="PANTHER" id="PTHR12202">
    <property type="entry name" value="ESF1 HOMOLOG"/>
    <property type="match status" value="1"/>
</dbReference>
<dbReference type="PANTHER" id="PTHR12202:SF0">
    <property type="entry name" value="ESF1 HOMOLOG"/>
    <property type="match status" value="1"/>
</dbReference>
<dbReference type="Pfam" id="PF08159">
    <property type="entry name" value="NUC153"/>
    <property type="match status" value="1"/>
</dbReference>
<dbReference type="Pfam" id="PF25121">
    <property type="entry name" value="RRM_ESF1"/>
    <property type="match status" value="1"/>
</dbReference>
<comment type="function">
    <text evidence="5 6">Involved in the 18S rRNA synthesis. Required for the early cleavages at sites A0, A1 and A2.</text>
</comment>
<comment type="subunit">
    <text evidence="6">Interacts with KRR1, NOP1, NSR1, PUF6 and UTP22, proteins involved in 18S rRNA synthesis. Also interacts with ribosomal proteins RPS1, RPS3, RPS4, RPS6, RPS11, RPL2, RPL3, RPL4, RPL7, RPL10, RPL20 and RPP0 as well as with the snoRNAs U3 and U14.</text>
</comment>
<comment type="interaction">
    <interactant intactId="EBI-34121">
        <id>Q06344</id>
    </interactant>
    <interactant intactId="EBI-28537">
        <id>P53743</id>
        <label>ESF2</label>
    </interactant>
    <organismsDiffer>false</organismsDiffer>
    <experiments>7</experiments>
</comment>
<comment type="interaction">
    <interactant intactId="EBI-34121">
        <id>Q06344</id>
    </interactant>
    <interactant intactId="EBI-5612">
        <id>P20448</id>
        <label>HCA4</label>
    </interactant>
    <organismsDiffer>false</organismsDiffer>
    <experiments>4</experiments>
</comment>
<comment type="interaction">
    <interactant intactId="EBI-34121">
        <id>Q06344</id>
    </interactant>
    <interactant intactId="EBI-28914">
        <id>P53914</id>
        <label>KRE33</label>
    </interactant>
    <organismsDiffer>false</organismsDiffer>
    <experiments>3</experiments>
</comment>
<comment type="interaction">
    <interactant intactId="EBI-34121">
        <id>Q06344</id>
    </interactant>
    <interactant intactId="EBI-1878">
        <id>P53254</id>
        <label>UTP22</label>
    </interactant>
    <organismsDiffer>false</organismsDiffer>
    <experiments>3</experiments>
</comment>
<comment type="interaction">
    <interactant intactId="EBI-34121">
        <id>Q06344</id>
    </interactant>
    <interactant intactId="EBI-22119">
        <id>Q02354</id>
        <label>UTP6</label>
    </interactant>
    <organismsDiffer>false</organismsDiffer>
    <experiments>3</experiments>
</comment>
<comment type="subcellular location">
    <subcellularLocation>
        <location evidence="3 5">Nucleus</location>
        <location evidence="3 5">Nucleolus</location>
    </subcellularLocation>
</comment>
<comment type="miscellaneous">
    <text evidence="4">Present with 656 molecules/cell in log phase SD medium.</text>
</comment>
<comment type="similarity">
    <text evidence="7">Belongs to the ESF1 family.</text>
</comment>